<accession>A8Z326</accession>
<reference key="1">
    <citation type="journal article" date="2007" name="BMC Microbiol.">
        <title>Subtle genetic changes enhance virulence of methicillin resistant and sensitive Staphylococcus aureus.</title>
        <authorList>
            <person name="Highlander S.K."/>
            <person name="Hulten K.G."/>
            <person name="Qin X."/>
            <person name="Jiang H."/>
            <person name="Yerrapragada S."/>
            <person name="Mason E.O. Jr."/>
            <person name="Shang Y."/>
            <person name="Williams T.M."/>
            <person name="Fortunov R.M."/>
            <person name="Liu Y."/>
            <person name="Igboeli O."/>
            <person name="Petrosino J."/>
            <person name="Tirumalai M."/>
            <person name="Uzman A."/>
            <person name="Fox G.E."/>
            <person name="Cardenas A.M."/>
            <person name="Muzny D.M."/>
            <person name="Hemphill L."/>
            <person name="Ding Y."/>
            <person name="Dugan S."/>
            <person name="Blyth P.R."/>
            <person name="Buhay C.J."/>
            <person name="Dinh H.H."/>
            <person name="Hawes A.C."/>
            <person name="Holder M."/>
            <person name="Kovar C.L."/>
            <person name="Lee S.L."/>
            <person name="Liu W."/>
            <person name="Nazareth L.V."/>
            <person name="Wang Q."/>
            <person name="Zhou J."/>
            <person name="Kaplan S.L."/>
            <person name="Weinstock G.M."/>
        </authorList>
    </citation>
    <scope>NUCLEOTIDE SEQUENCE [LARGE SCALE GENOMIC DNA]</scope>
    <source>
        <strain>USA300 / TCH1516</strain>
    </source>
</reference>
<keyword id="KW-0413">Isomerase</keyword>
<keyword id="KW-0819">tRNA processing</keyword>
<gene>
    <name evidence="1" type="primary">truA</name>
    <name type="ordered locus">USA300HOU_2210</name>
</gene>
<evidence type="ECO:0000255" key="1">
    <source>
        <dbReference type="HAMAP-Rule" id="MF_00171"/>
    </source>
</evidence>
<proteinExistence type="inferred from homology"/>
<organism>
    <name type="scientific">Staphylococcus aureus (strain USA300 / TCH1516)</name>
    <dbReference type="NCBI Taxonomy" id="451516"/>
    <lineage>
        <taxon>Bacteria</taxon>
        <taxon>Bacillati</taxon>
        <taxon>Bacillota</taxon>
        <taxon>Bacilli</taxon>
        <taxon>Bacillales</taxon>
        <taxon>Staphylococcaceae</taxon>
        <taxon>Staphylococcus</taxon>
    </lineage>
</organism>
<sequence>MRILVEIAYQGNNFLGFQIQQNGRTVQQQFEKLLQRMHKRHVRIHPSSRTDRGVHAIQQYFHFDTELNIPMSQWQYAMNRTLPDDIYVNNVVTVDDDFHCRYDCVGKRYRYKVYQAQHRDPFQSGLKTFIPETLDLGKMNRAAQQFIGTHDFTGFCSQKTEVESKVRTLYQSEIVKTDDGFDYIVTGSGFLYNMVRVLVAFLIEVGKGRHEVSDVPKLLESKNRKNVPFTAPAEGLYLEKIYLDENELLKDFGNDIKIHRKKSLQND</sequence>
<name>TRUA_STAAT</name>
<dbReference type="EC" id="5.4.99.12" evidence="1"/>
<dbReference type="EMBL" id="CP000730">
    <property type="protein sequence ID" value="ABX30203.1"/>
    <property type="molecule type" value="Genomic_DNA"/>
</dbReference>
<dbReference type="RefSeq" id="WP_001221860.1">
    <property type="nucleotide sequence ID" value="NC_010079.1"/>
</dbReference>
<dbReference type="SMR" id="A8Z326"/>
<dbReference type="KEGG" id="sax:USA300HOU_2210"/>
<dbReference type="HOGENOM" id="CLU_014673_0_1_9"/>
<dbReference type="GO" id="GO:0003723">
    <property type="term" value="F:RNA binding"/>
    <property type="evidence" value="ECO:0007669"/>
    <property type="project" value="InterPro"/>
</dbReference>
<dbReference type="GO" id="GO:0160147">
    <property type="term" value="F:tRNA pseudouridine(38-40) synthase activity"/>
    <property type="evidence" value="ECO:0007669"/>
    <property type="project" value="UniProtKB-EC"/>
</dbReference>
<dbReference type="GO" id="GO:0031119">
    <property type="term" value="P:tRNA pseudouridine synthesis"/>
    <property type="evidence" value="ECO:0007669"/>
    <property type="project" value="UniProtKB-UniRule"/>
</dbReference>
<dbReference type="CDD" id="cd02570">
    <property type="entry name" value="PseudoU_synth_EcTruA"/>
    <property type="match status" value="1"/>
</dbReference>
<dbReference type="FunFam" id="3.30.70.580:FF:000001">
    <property type="entry name" value="tRNA pseudouridine synthase A"/>
    <property type="match status" value="1"/>
</dbReference>
<dbReference type="Gene3D" id="3.30.70.660">
    <property type="entry name" value="Pseudouridine synthase I, catalytic domain, C-terminal subdomain"/>
    <property type="match status" value="1"/>
</dbReference>
<dbReference type="Gene3D" id="3.30.70.580">
    <property type="entry name" value="Pseudouridine synthase I, catalytic domain, N-terminal subdomain"/>
    <property type="match status" value="1"/>
</dbReference>
<dbReference type="HAMAP" id="MF_00171">
    <property type="entry name" value="TruA"/>
    <property type="match status" value="1"/>
</dbReference>
<dbReference type="InterPro" id="IPR020103">
    <property type="entry name" value="PsdUridine_synth_cat_dom_sf"/>
</dbReference>
<dbReference type="InterPro" id="IPR001406">
    <property type="entry name" value="PsdUridine_synth_TruA"/>
</dbReference>
<dbReference type="InterPro" id="IPR020097">
    <property type="entry name" value="PsdUridine_synth_TruA_a/b_dom"/>
</dbReference>
<dbReference type="InterPro" id="IPR020095">
    <property type="entry name" value="PsdUridine_synth_TruA_C"/>
</dbReference>
<dbReference type="InterPro" id="IPR020094">
    <property type="entry name" value="TruA/RsuA/RluB/E/F_N"/>
</dbReference>
<dbReference type="NCBIfam" id="TIGR00071">
    <property type="entry name" value="hisT_truA"/>
    <property type="match status" value="1"/>
</dbReference>
<dbReference type="PANTHER" id="PTHR11142">
    <property type="entry name" value="PSEUDOURIDYLATE SYNTHASE"/>
    <property type="match status" value="1"/>
</dbReference>
<dbReference type="PANTHER" id="PTHR11142:SF0">
    <property type="entry name" value="TRNA PSEUDOURIDINE SYNTHASE-LIKE 1"/>
    <property type="match status" value="1"/>
</dbReference>
<dbReference type="Pfam" id="PF01416">
    <property type="entry name" value="PseudoU_synth_1"/>
    <property type="match status" value="2"/>
</dbReference>
<dbReference type="PIRSF" id="PIRSF001430">
    <property type="entry name" value="tRNA_psdUrid_synth"/>
    <property type="match status" value="1"/>
</dbReference>
<dbReference type="SUPFAM" id="SSF55120">
    <property type="entry name" value="Pseudouridine synthase"/>
    <property type="match status" value="1"/>
</dbReference>
<feature type="chain" id="PRO_1000077107" description="tRNA pseudouridine synthase A">
    <location>
        <begin position="1"/>
        <end position="267"/>
    </location>
</feature>
<feature type="active site" description="Nucleophile" evidence="1">
    <location>
        <position position="51"/>
    </location>
</feature>
<feature type="binding site" evidence="1">
    <location>
        <position position="109"/>
    </location>
    <ligand>
        <name>substrate</name>
    </ligand>
</feature>
<protein>
    <recommendedName>
        <fullName evidence="1">tRNA pseudouridine synthase A</fullName>
        <ecNumber evidence="1">5.4.99.12</ecNumber>
    </recommendedName>
    <alternativeName>
        <fullName evidence="1">tRNA pseudouridine(38-40) synthase</fullName>
    </alternativeName>
    <alternativeName>
        <fullName evidence="1">tRNA pseudouridylate synthase I</fullName>
    </alternativeName>
    <alternativeName>
        <fullName evidence="1">tRNA-uridine isomerase I</fullName>
    </alternativeName>
</protein>
<comment type="function">
    <text evidence="1">Formation of pseudouridine at positions 38, 39 and 40 in the anticodon stem and loop of transfer RNAs.</text>
</comment>
<comment type="catalytic activity">
    <reaction evidence="1">
        <text>uridine(38/39/40) in tRNA = pseudouridine(38/39/40) in tRNA</text>
        <dbReference type="Rhea" id="RHEA:22376"/>
        <dbReference type="Rhea" id="RHEA-COMP:10085"/>
        <dbReference type="Rhea" id="RHEA-COMP:10087"/>
        <dbReference type="ChEBI" id="CHEBI:65314"/>
        <dbReference type="ChEBI" id="CHEBI:65315"/>
        <dbReference type="EC" id="5.4.99.12"/>
    </reaction>
</comment>
<comment type="subunit">
    <text evidence="1">Homodimer.</text>
</comment>
<comment type="similarity">
    <text evidence="1">Belongs to the tRNA pseudouridine synthase TruA family.</text>
</comment>